<feature type="chain" id="PRO_1000055108" description="ATP synthase subunit beta">
    <location>
        <begin position="1"/>
        <end position="460"/>
    </location>
</feature>
<feature type="binding site" evidence="1">
    <location>
        <begin position="150"/>
        <end position="157"/>
    </location>
    <ligand>
        <name>ATP</name>
        <dbReference type="ChEBI" id="CHEBI:30616"/>
    </ligand>
</feature>
<sequence length="460" mass="50325">MATGKIVQVIGAVVDVEFPQDAVPRVYDALEVQNGNERLVLEVQQQLGGGIVRTIAMGSSDGLRRGLDVKDLEHPIEVPVGKATLGRIMNVLGEPVDMKGEIGEEERWAIHRAAPSYEELSNSQELLETGIKVIDLMCPFAKGGKVGLFGGAGVGKTVNMMELIRNIAIEHSGYSVFAGVGERTREGNDFYHEMTDSNVIDKVSLVYGQMNEPPGNRLRVALTGLTMAEKFRDEGRDVLLFVDNIYRYTLAGTEVSALLGRMPSAVGYQPTLAEEMGVLQERITSTKTGSITSVQAVYVPADDLTDPSPATTFAHLDATVVLSRQIASLGIYPAVDPLDSTSRQLDPLVVGQEHYDTARGVQSILQRYQELKDIIAILGMDELSEEDKLVVARARKIQRFLSQPFFVAEVFTGSPGKYVSLKDTIRGFKGIMEGEYDHLPEQAFYMVGSIEEAVEKAKKL</sequence>
<evidence type="ECO:0000255" key="1">
    <source>
        <dbReference type="HAMAP-Rule" id="MF_01347"/>
    </source>
</evidence>
<dbReference type="EC" id="7.1.2.2" evidence="1"/>
<dbReference type="EMBL" id="CP000468">
    <property type="protein sequence ID" value="ABJ03204.1"/>
    <property type="molecule type" value="Genomic_DNA"/>
</dbReference>
<dbReference type="RefSeq" id="WP_000190506.1">
    <property type="nucleotide sequence ID" value="NZ_CADILS010000011.1"/>
</dbReference>
<dbReference type="SMR" id="A1AHR4"/>
<dbReference type="GeneID" id="93778235"/>
<dbReference type="KEGG" id="ecv:APECO1_2729"/>
<dbReference type="HOGENOM" id="CLU_022398_0_2_6"/>
<dbReference type="Proteomes" id="UP000008216">
    <property type="component" value="Chromosome"/>
</dbReference>
<dbReference type="GO" id="GO:0005886">
    <property type="term" value="C:plasma membrane"/>
    <property type="evidence" value="ECO:0007669"/>
    <property type="project" value="UniProtKB-SubCell"/>
</dbReference>
<dbReference type="GO" id="GO:0045259">
    <property type="term" value="C:proton-transporting ATP synthase complex"/>
    <property type="evidence" value="ECO:0007669"/>
    <property type="project" value="UniProtKB-KW"/>
</dbReference>
<dbReference type="GO" id="GO:0005524">
    <property type="term" value="F:ATP binding"/>
    <property type="evidence" value="ECO:0007669"/>
    <property type="project" value="UniProtKB-UniRule"/>
</dbReference>
<dbReference type="GO" id="GO:0016887">
    <property type="term" value="F:ATP hydrolysis activity"/>
    <property type="evidence" value="ECO:0007669"/>
    <property type="project" value="InterPro"/>
</dbReference>
<dbReference type="GO" id="GO:0046933">
    <property type="term" value="F:proton-transporting ATP synthase activity, rotational mechanism"/>
    <property type="evidence" value="ECO:0007669"/>
    <property type="project" value="UniProtKB-UniRule"/>
</dbReference>
<dbReference type="CDD" id="cd18110">
    <property type="entry name" value="ATP-synt_F1_beta_C"/>
    <property type="match status" value="1"/>
</dbReference>
<dbReference type="CDD" id="cd18115">
    <property type="entry name" value="ATP-synt_F1_beta_N"/>
    <property type="match status" value="1"/>
</dbReference>
<dbReference type="CDD" id="cd01133">
    <property type="entry name" value="F1-ATPase_beta_CD"/>
    <property type="match status" value="1"/>
</dbReference>
<dbReference type="FunFam" id="1.10.1140.10:FF:000001">
    <property type="entry name" value="ATP synthase subunit beta"/>
    <property type="match status" value="1"/>
</dbReference>
<dbReference type="FunFam" id="2.40.10.170:FF:000003">
    <property type="entry name" value="ATP synthase subunit beta"/>
    <property type="match status" value="1"/>
</dbReference>
<dbReference type="FunFam" id="3.40.50.300:FF:000004">
    <property type="entry name" value="ATP synthase subunit beta"/>
    <property type="match status" value="1"/>
</dbReference>
<dbReference type="Gene3D" id="2.40.10.170">
    <property type="match status" value="1"/>
</dbReference>
<dbReference type="Gene3D" id="1.10.1140.10">
    <property type="entry name" value="Bovine Mitochondrial F1-atpase, Atp Synthase Beta Chain, Chain D, domain 3"/>
    <property type="match status" value="1"/>
</dbReference>
<dbReference type="Gene3D" id="3.40.50.300">
    <property type="entry name" value="P-loop containing nucleotide triphosphate hydrolases"/>
    <property type="match status" value="1"/>
</dbReference>
<dbReference type="HAMAP" id="MF_01347">
    <property type="entry name" value="ATP_synth_beta_bact"/>
    <property type="match status" value="1"/>
</dbReference>
<dbReference type="InterPro" id="IPR003593">
    <property type="entry name" value="AAA+_ATPase"/>
</dbReference>
<dbReference type="InterPro" id="IPR055190">
    <property type="entry name" value="ATP-synt_VA_C"/>
</dbReference>
<dbReference type="InterPro" id="IPR005722">
    <property type="entry name" value="ATP_synth_F1_bsu"/>
</dbReference>
<dbReference type="InterPro" id="IPR020003">
    <property type="entry name" value="ATPase_a/bsu_AS"/>
</dbReference>
<dbReference type="InterPro" id="IPR050053">
    <property type="entry name" value="ATPase_alpha/beta_chains"/>
</dbReference>
<dbReference type="InterPro" id="IPR004100">
    <property type="entry name" value="ATPase_F1/V1/A1_a/bsu_N"/>
</dbReference>
<dbReference type="InterPro" id="IPR036121">
    <property type="entry name" value="ATPase_F1/V1/A1_a/bsu_N_sf"/>
</dbReference>
<dbReference type="InterPro" id="IPR000194">
    <property type="entry name" value="ATPase_F1/V1/A1_a/bsu_nucl-bd"/>
</dbReference>
<dbReference type="InterPro" id="IPR024034">
    <property type="entry name" value="ATPase_F1/V1_b/a_C"/>
</dbReference>
<dbReference type="InterPro" id="IPR027417">
    <property type="entry name" value="P-loop_NTPase"/>
</dbReference>
<dbReference type="NCBIfam" id="TIGR01039">
    <property type="entry name" value="atpD"/>
    <property type="match status" value="1"/>
</dbReference>
<dbReference type="PANTHER" id="PTHR15184">
    <property type="entry name" value="ATP SYNTHASE"/>
    <property type="match status" value="1"/>
</dbReference>
<dbReference type="PANTHER" id="PTHR15184:SF71">
    <property type="entry name" value="ATP SYNTHASE SUBUNIT BETA, MITOCHONDRIAL"/>
    <property type="match status" value="1"/>
</dbReference>
<dbReference type="Pfam" id="PF00006">
    <property type="entry name" value="ATP-synt_ab"/>
    <property type="match status" value="1"/>
</dbReference>
<dbReference type="Pfam" id="PF02874">
    <property type="entry name" value="ATP-synt_ab_N"/>
    <property type="match status" value="1"/>
</dbReference>
<dbReference type="Pfam" id="PF22919">
    <property type="entry name" value="ATP-synt_VA_C"/>
    <property type="match status" value="1"/>
</dbReference>
<dbReference type="SMART" id="SM00382">
    <property type="entry name" value="AAA"/>
    <property type="match status" value="1"/>
</dbReference>
<dbReference type="SUPFAM" id="SSF47917">
    <property type="entry name" value="C-terminal domain of alpha and beta subunits of F1 ATP synthase"/>
    <property type="match status" value="1"/>
</dbReference>
<dbReference type="SUPFAM" id="SSF50615">
    <property type="entry name" value="N-terminal domain of alpha and beta subunits of F1 ATP synthase"/>
    <property type="match status" value="1"/>
</dbReference>
<dbReference type="SUPFAM" id="SSF52540">
    <property type="entry name" value="P-loop containing nucleoside triphosphate hydrolases"/>
    <property type="match status" value="1"/>
</dbReference>
<dbReference type="PROSITE" id="PS00152">
    <property type="entry name" value="ATPASE_ALPHA_BETA"/>
    <property type="match status" value="1"/>
</dbReference>
<gene>
    <name evidence="1" type="primary">atpD</name>
    <name type="ordered locus">Ecok1_37100</name>
    <name type="ORF">APECO1_2729</name>
</gene>
<reference key="1">
    <citation type="journal article" date="2007" name="J. Bacteriol.">
        <title>The genome sequence of avian pathogenic Escherichia coli strain O1:K1:H7 shares strong similarities with human extraintestinal pathogenic E. coli genomes.</title>
        <authorList>
            <person name="Johnson T.J."/>
            <person name="Kariyawasam S."/>
            <person name="Wannemuehler Y."/>
            <person name="Mangiamele P."/>
            <person name="Johnson S.J."/>
            <person name="Doetkott C."/>
            <person name="Skyberg J.A."/>
            <person name="Lynne A.M."/>
            <person name="Johnson J.R."/>
            <person name="Nolan L.K."/>
        </authorList>
    </citation>
    <scope>NUCLEOTIDE SEQUENCE [LARGE SCALE GENOMIC DNA]</scope>
</reference>
<accession>A1AHR4</accession>
<keyword id="KW-0066">ATP synthesis</keyword>
<keyword id="KW-0067">ATP-binding</keyword>
<keyword id="KW-0997">Cell inner membrane</keyword>
<keyword id="KW-1003">Cell membrane</keyword>
<keyword id="KW-0139">CF(1)</keyword>
<keyword id="KW-0375">Hydrogen ion transport</keyword>
<keyword id="KW-0406">Ion transport</keyword>
<keyword id="KW-0472">Membrane</keyword>
<keyword id="KW-0547">Nucleotide-binding</keyword>
<keyword id="KW-1185">Reference proteome</keyword>
<keyword id="KW-1278">Translocase</keyword>
<keyword id="KW-0813">Transport</keyword>
<protein>
    <recommendedName>
        <fullName evidence="1">ATP synthase subunit beta</fullName>
        <ecNumber evidence="1">7.1.2.2</ecNumber>
    </recommendedName>
    <alternativeName>
        <fullName evidence="1">ATP synthase F1 sector subunit beta</fullName>
    </alternativeName>
    <alternativeName>
        <fullName evidence="1">F-ATPase subunit beta</fullName>
    </alternativeName>
</protein>
<proteinExistence type="inferred from homology"/>
<comment type="function">
    <text evidence="1">Produces ATP from ADP in the presence of a proton gradient across the membrane. The catalytic sites are hosted primarily by the beta subunits.</text>
</comment>
<comment type="catalytic activity">
    <reaction evidence="1">
        <text>ATP + H2O + 4 H(+)(in) = ADP + phosphate + 5 H(+)(out)</text>
        <dbReference type="Rhea" id="RHEA:57720"/>
        <dbReference type="ChEBI" id="CHEBI:15377"/>
        <dbReference type="ChEBI" id="CHEBI:15378"/>
        <dbReference type="ChEBI" id="CHEBI:30616"/>
        <dbReference type="ChEBI" id="CHEBI:43474"/>
        <dbReference type="ChEBI" id="CHEBI:456216"/>
        <dbReference type="EC" id="7.1.2.2"/>
    </reaction>
</comment>
<comment type="subunit">
    <text evidence="1">F-type ATPases have 2 components, CF(1) - the catalytic core - and CF(0) - the membrane proton channel. CF(1) has five subunits: alpha(3), beta(3), gamma(1), delta(1), epsilon(1). CF(0) has three main subunits: a(1), b(2) and c(9-12). The alpha and beta chains form an alternating ring which encloses part of the gamma chain. CF(1) is attached to CF(0) by a central stalk formed by the gamma and epsilon chains, while a peripheral stalk is formed by the delta and b chains.</text>
</comment>
<comment type="subcellular location">
    <subcellularLocation>
        <location evidence="1">Cell inner membrane</location>
        <topology evidence="1">Peripheral membrane protein</topology>
    </subcellularLocation>
</comment>
<comment type="similarity">
    <text evidence="1">Belongs to the ATPase alpha/beta chains family.</text>
</comment>
<organism>
    <name type="scientific">Escherichia coli O1:K1 / APEC</name>
    <dbReference type="NCBI Taxonomy" id="405955"/>
    <lineage>
        <taxon>Bacteria</taxon>
        <taxon>Pseudomonadati</taxon>
        <taxon>Pseudomonadota</taxon>
        <taxon>Gammaproteobacteria</taxon>
        <taxon>Enterobacterales</taxon>
        <taxon>Enterobacteriaceae</taxon>
        <taxon>Escherichia</taxon>
    </lineage>
</organism>
<name>ATPB_ECOK1</name>